<gene>
    <name type="primary">bcsP31</name>
    <name type="ordered locus">BMEI0796</name>
</gene>
<accession>P0A3T2</accession>
<accession>P12920</accession>
<sequence>MKFGSKIRRLAVAAVAGAIALGASFAVAQAPTFFRIGTGGTAGTYYPIGGLIANAISGAGEKGVPGLVATAVSSNGSVANINAIKSGALESGFTQSDVAYWAYNGTGLYDGKGKVEDLRLLATLYPETIHIVARKDANIKSVADLKGKRVSLDEPGSGTIVDARIVLEAYGLTEDDIKAEHLKPGPAGERLKDGALDAYFFVGGYPTGAISELAISNGISLVPISGPEADKILEKYSFFSKDVVPAGAYKDVAETPTLAVAAQWVTSAKQPDDLIYNITKVLWNEDTRKALDAGHAKGKLIKLDSATSSLGIPLHPGAERFYKEAGVLK</sequence>
<comment type="miscellaneous">
    <text>Brucella abortus is the causative agent for brucellosis in cattle and man.</text>
</comment>
<proteinExistence type="predicted"/>
<name>BCSP_BRUME</name>
<feature type="signal peptide">
    <location>
        <begin position="1"/>
        <end position="28"/>
    </location>
</feature>
<feature type="chain" id="PRO_0000020805" description="31 kDa immunogenic protein">
    <location>
        <begin position="29"/>
        <end position="329"/>
    </location>
</feature>
<protein>
    <recommendedName>
        <fullName>31 kDa immunogenic protein</fullName>
    </recommendedName>
</protein>
<keyword id="KW-0732">Signal</keyword>
<dbReference type="EMBL" id="AE008917">
    <property type="protein sequence ID" value="AAL51977.1"/>
    <property type="molecule type" value="Genomic_DNA"/>
</dbReference>
<dbReference type="PIR" id="AF3351">
    <property type="entry name" value="AF3351"/>
</dbReference>
<dbReference type="RefSeq" id="WP_002964322.1">
    <property type="nucleotide sequence ID" value="NZ_GG703780.1"/>
</dbReference>
<dbReference type="SMR" id="P0A3T2"/>
<dbReference type="KEGG" id="bme:BMEI0796"/>
<dbReference type="KEGG" id="bmel:DK63_627"/>
<dbReference type="PATRIC" id="fig|224914.52.peg.655"/>
<dbReference type="eggNOG" id="COG2358">
    <property type="taxonomic scope" value="Bacteria"/>
</dbReference>
<dbReference type="PhylomeDB" id="P0A3T2"/>
<dbReference type="PRO" id="PR:P0A3T2"/>
<dbReference type="Proteomes" id="UP000000419">
    <property type="component" value="Chromosome I"/>
</dbReference>
<dbReference type="CDD" id="cd13520">
    <property type="entry name" value="PBP2_TAXI_TRAP"/>
    <property type="match status" value="1"/>
</dbReference>
<dbReference type="Gene3D" id="3.40.190.10">
    <property type="entry name" value="Periplasmic binding protein-like II"/>
    <property type="match status" value="2"/>
</dbReference>
<dbReference type="InterPro" id="IPR011852">
    <property type="entry name" value="TRAP_TAXI"/>
</dbReference>
<dbReference type="NCBIfam" id="TIGR02122">
    <property type="entry name" value="TRAP_TAXI"/>
    <property type="match status" value="1"/>
</dbReference>
<dbReference type="PANTHER" id="PTHR42941">
    <property type="entry name" value="SLL1037 PROTEIN"/>
    <property type="match status" value="1"/>
</dbReference>
<dbReference type="PANTHER" id="PTHR42941:SF1">
    <property type="entry name" value="SLL1037 PROTEIN"/>
    <property type="match status" value="1"/>
</dbReference>
<dbReference type="Pfam" id="PF16868">
    <property type="entry name" value="NMT1_3"/>
    <property type="match status" value="1"/>
</dbReference>
<dbReference type="SUPFAM" id="SSF53850">
    <property type="entry name" value="Periplasmic binding protein-like II"/>
    <property type="match status" value="1"/>
</dbReference>
<organism>
    <name type="scientific">Brucella melitensis biotype 1 (strain ATCC 23456 / CCUG 17765 / NCTC 10094 / 16M)</name>
    <dbReference type="NCBI Taxonomy" id="224914"/>
    <lineage>
        <taxon>Bacteria</taxon>
        <taxon>Pseudomonadati</taxon>
        <taxon>Pseudomonadota</taxon>
        <taxon>Alphaproteobacteria</taxon>
        <taxon>Hyphomicrobiales</taxon>
        <taxon>Brucellaceae</taxon>
        <taxon>Brucella/Ochrobactrum group</taxon>
        <taxon>Brucella</taxon>
    </lineage>
</organism>
<reference key="1">
    <citation type="journal article" date="2002" name="Proc. Natl. Acad. Sci. U.S.A.">
        <title>The genome sequence of the facultative intracellular pathogen Brucella melitensis.</title>
        <authorList>
            <person name="DelVecchio V.G."/>
            <person name="Kapatral V."/>
            <person name="Redkar R.J."/>
            <person name="Patra G."/>
            <person name="Mujer C."/>
            <person name="Los T."/>
            <person name="Ivanova N."/>
            <person name="Anderson I."/>
            <person name="Bhattacharyya A."/>
            <person name="Lykidis A."/>
            <person name="Reznik G."/>
            <person name="Jablonski L."/>
            <person name="Larsen N."/>
            <person name="D'Souza M."/>
            <person name="Bernal A."/>
            <person name="Mazur M."/>
            <person name="Goltsman E."/>
            <person name="Selkov E."/>
            <person name="Elzer P.H."/>
            <person name="Hagius S."/>
            <person name="O'Callaghan D."/>
            <person name="Letesson J.-J."/>
            <person name="Haselkorn R."/>
            <person name="Kyrpides N.C."/>
            <person name="Overbeek R."/>
        </authorList>
    </citation>
    <scope>NUCLEOTIDE SEQUENCE [LARGE SCALE GENOMIC DNA]</scope>
    <source>
        <strain>ATCC 23456 / CCUG 17765 / NCTC 10094 / 16M</strain>
    </source>
</reference>